<comment type="function">
    <text evidence="1">Catalyzes the attachment of alanine to tRNA(Ala) in a two-step reaction: alanine is first activated by ATP to form Ala-AMP and then transferred to the acceptor end of tRNA(Ala). Also edits incorrectly charged Ser-tRNA(Ala) and Gly-tRNA(Ala) via its editing domain.</text>
</comment>
<comment type="catalytic activity">
    <reaction evidence="1">
        <text>tRNA(Ala) + L-alanine + ATP = L-alanyl-tRNA(Ala) + AMP + diphosphate</text>
        <dbReference type="Rhea" id="RHEA:12540"/>
        <dbReference type="Rhea" id="RHEA-COMP:9657"/>
        <dbReference type="Rhea" id="RHEA-COMP:9923"/>
        <dbReference type="ChEBI" id="CHEBI:30616"/>
        <dbReference type="ChEBI" id="CHEBI:33019"/>
        <dbReference type="ChEBI" id="CHEBI:57972"/>
        <dbReference type="ChEBI" id="CHEBI:78442"/>
        <dbReference type="ChEBI" id="CHEBI:78497"/>
        <dbReference type="ChEBI" id="CHEBI:456215"/>
        <dbReference type="EC" id="6.1.1.7"/>
    </reaction>
</comment>
<comment type="cofactor">
    <cofactor evidence="1">
        <name>Zn(2+)</name>
        <dbReference type="ChEBI" id="CHEBI:29105"/>
    </cofactor>
    <text evidence="1">Binds 1 zinc ion per subunit.</text>
</comment>
<comment type="subcellular location">
    <subcellularLocation>
        <location evidence="1">Cytoplasm</location>
    </subcellularLocation>
</comment>
<comment type="domain">
    <text evidence="1">Consists of three domains; the N-terminal catalytic domain, the editing domain and the C-terminal C-Ala domain. The editing domain removes incorrectly charged amino acids, while the C-Ala domain, along with tRNA(Ala), serves as a bridge to cooperatively bring together the editing and aminoacylation centers thus stimulating deacylation of misacylated tRNAs.</text>
</comment>
<comment type="similarity">
    <text evidence="1">Belongs to the class-II aminoacyl-tRNA synthetase family.</text>
</comment>
<proteinExistence type="inferred from homology"/>
<feature type="chain" id="PRO_0000075126" description="Alanine--tRNA ligase">
    <location>
        <begin position="1"/>
        <end position="847"/>
    </location>
</feature>
<feature type="binding site" evidence="1">
    <location>
        <position position="554"/>
    </location>
    <ligand>
        <name>Zn(2+)</name>
        <dbReference type="ChEBI" id="CHEBI:29105"/>
    </ligand>
</feature>
<feature type="binding site" evidence="1">
    <location>
        <position position="558"/>
    </location>
    <ligand>
        <name>Zn(2+)</name>
        <dbReference type="ChEBI" id="CHEBI:29105"/>
    </ligand>
</feature>
<feature type="binding site" evidence="1">
    <location>
        <position position="656"/>
    </location>
    <ligand>
        <name>Zn(2+)</name>
        <dbReference type="ChEBI" id="CHEBI:29105"/>
    </ligand>
</feature>
<feature type="binding site" evidence="1">
    <location>
        <position position="660"/>
    </location>
    <ligand>
        <name>Zn(2+)</name>
        <dbReference type="ChEBI" id="CHEBI:29105"/>
    </ligand>
</feature>
<accession>Q9ZJY5</accession>
<name>SYA_HELPJ</name>
<sequence length="847" mass="94978">MDIRNEFLQFFQNKGHEIYPSMPLVPNDATLLFTNAGMVQFKDIFTGIVPRPSIPRAASSQLCMRAGGKHNDLENVGYTARHHTLFEMLGNFSFGDYFKEEAILFAWEFVTKNLGFKPKDLYISVHEKDDEAVKLWEKFVPVDRIKKMGDKDNFWQMGDSGPCGPCSEIYIDQGEKHFKGSEDYFGGEGDRFLEIWNLVFMQYERSNDGVLSPLPKPSIDTGMGLERVQALLEHKLNNFDSSLFAPLMEEISELTGLDYASEFQPSFRVVADHARAVAFLLAQEVHFNKEGRGYVLRRILRRALRHGYLMGLKEAFLYKVVGVVCEQFSNVHAYLKESKEMVMKECFEEEERFLETLESGMELFNLSLTHLNENKIFDGKIAFKLYDTFGFPLDLTNDMLRSHGACVDMQGFENCMQEQVKRSKASWKGKQNNADFSAILNAYAPNEFVGYETTECLANALGFFDSDFKEITEANPNQEVWVLLEKTPFYAEGGGAIGDRGTLFKDNEEAALVLDTKNFFGLNFSLLEIKKALKKGDQVIAQVSDERLEIAKHHSATHLLQSALREVLGSHVSQAGSLVESKRLRFDFSHAKALNDEELEKVEDLVNAQIFKHLTSQVEHMPLNQAKDKGALALFSEKYAENVRVVSFKEASIELCGGIHVENTGLIGGFRIVKESGVSSGVRRIEAVCGKAFYQLTKEENKELKNAKTLLKNNDVIAGINKLKESVKNSQKAPVSMDLPVEKIHGVNLVVGVVEQGDIKEMIDRLKSKHEKLLAIVFKKENERITLACGVKNVPIKANAWANEVAQILGGKGGGRDDFASAGGKDIENLQAALNLAKNTALKALEG</sequence>
<keyword id="KW-0030">Aminoacyl-tRNA synthetase</keyword>
<keyword id="KW-0067">ATP-binding</keyword>
<keyword id="KW-0963">Cytoplasm</keyword>
<keyword id="KW-0436">Ligase</keyword>
<keyword id="KW-0479">Metal-binding</keyword>
<keyword id="KW-0547">Nucleotide-binding</keyword>
<keyword id="KW-0648">Protein biosynthesis</keyword>
<keyword id="KW-0694">RNA-binding</keyword>
<keyword id="KW-0820">tRNA-binding</keyword>
<keyword id="KW-0862">Zinc</keyword>
<evidence type="ECO:0000255" key="1">
    <source>
        <dbReference type="HAMAP-Rule" id="MF_00036"/>
    </source>
</evidence>
<dbReference type="EC" id="6.1.1.7" evidence="1"/>
<dbReference type="EMBL" id="AE001439">
    <property type="protein sequence ID" value="AAD06738.1"/>
    <property type="molecule type" value="Genomic_DNA"/>
</dbReference>
<dbReference type="PIR" id="F71842">
    <property type="entry name" value="F71842"/>
</dbReference>
<dbReference type="RefSeq" id="WP_000354775.1">
    <property type="nucleotide sequence ID" value="NC_000921.1"/>
</dbReference>
<dbReference type="SMR" id="Q9ZJY5"/>
<dbReference type="KEGG" id="hpj:jhp_1162"/>
<dbReference type="PATRIC" id="fig|85963.30.peg.1412"/>
<dbReference type="eggNOG" id="COG0013">
    <property type="taxonomic scope" value="Bacteria"/>
</dbReference>
<dbReference type="Proteomes" id="UP000000804">
    <property type="component" value="Chromosome"/>
</dbReference>
<dbReference type="GO" id="GO:0005829">
    <property type="term" value="C:cytosol"/>
    <property type="evidence" value="ECO:0007669"/>
    <property type="project" value="TreeGrafter"/>
</dbReference>
<dbReference type="GO" id="GO:0004813">
    <property type="term" value="F:alanine-tRNA ligase activity"/>
    <property type="evidence" value="ECO:0007669"/>
    <property type="project" value="UniProtKB-UniRule"/>
</dbReference>
<dbReference type="GO" id="GO:0002161">
    <property type="term" value="F:aminoacyl-tRNA deacylase activity"/>
    <property type="evidence" value="ECO:0007669"/>
    <property type="project" value="TreeGrafter"/>
</dbReference>
<dbReference type="GO" id="GO:0005524">
    <property type="term" value="F:ATP binding"/>
    <property type="evidence" value="ECO:0007669"/>
    <property type="project" value="UniProtKB-UniRule"/>
</dbReference>
<dbReference type="GO" id="GO:0000049">
    <property type="term" value="F:tRNA binding"/>
    <property type="evidence" value="ECO:0007669"/>
    <property type="project" value="UniProtKB-KW"/>
</dbReference>
<dbReference type="GO" id="GO:0008270">
    <property type="term" value="F:zinc ion binding"/>
    <property type="evidence" value="ECO:0007669"/>
    <property type="project" value="UniProtKB-UniRule"/>
</dbReference>
<dbReference type="GO" id="GO:0006419">
    <property type="term" value="P:alanyl-tRNA aminoacylation"/>
    <property type="evidence" value="ECO:0007669"/>
    <property type="project" value="UniProtKB-UniRule"/>
</dbReference>
<dbReference type="GO" id="GO:0045892">
    <property type="term" value="P:negative regulation of DNA-templated transcription"/>
    <property type="evidence" value="ECO:0007669"/>
    <property type="project" value="TreeGrafter"/>
</dbReference>
<dbReference type="CDD" id="cd00673">
    <property type="entry name" value="AlaRS_core"/>
    <property type="match status" value="1"/>
</dbReference>
<dbReference type="FunFam" id="3.10.310.40:FF:000001">
    <property type="entry name" value="Alanine--tRNA ligase"/>
    <property type="match status" value="1"/>
</dbReference>
<dbReference type="FunFam" id="3.30.54.20:FF:000001">
    <property type="entry name" value="Alanine--tRNA ligase"/>
    <property type="match status" value="1"/>
</dbReference>
<dbReference type="FunFam" id="3.30.930.10:FF:000004">
    <property type="entry name" value="Alanine--tRNA ligase"/>
    <property type="match status" value="1"/>
</dbReference>
<dbReference type="FunFam" id="3.30.980.10:FF:000004">
    <property type="entry name" value="Alanine--tRNA ligase, cytoplasmic"/>
    <property type="match status" value="1"/>
</dbReference>
<dbReference type="Gene3D" id="2.40.30.130">
    <property type="match status" value="1"/>
</dbReference>
<dbReference type="Gene3D" id="3.10.310.40">
    <property type="match status" value="1"/>
</dbReference>
<dbReference type="Gene3D" id="3.30.54.20">
    <property type="match status" value="1"/>
</dbReference>
<dbReference type="Gene3D" id="3.30.930.10">
    <property type="entry name" value="Bira Bifunctional Protein, Domain 2"/>
    <property type="match status" value="1"/>
</dbReference>
<dbReference type="Gene3D" id="3.30.980.10">
    <property type="entry name" value="Threonyl-trna Synthetase, Chain A, domain 2"/>
    <property type="match status" value="1"/>
</dbReference>
<dbReference type="HAMAP" id="MF_00036_B">
    <property type="entry name" value="Ala_tRNA_synth_B"/>
    <property type="match status" value="1"/>
</dbReference>
<dbReference type="InterPro" id="IPR045864">
    <property type="entry name" value="aa-tRNA-synth_II/BPL/LPL"/>
</dbReference>
<dbReference type="InterPro" id="IPR002318">
    <property type="entry name" value="Ala-tRNA-lgiase_IIc"/>
</dbReference>
<dbReference type="InterPro" id="IPR018162">
    <property type="entry name" value="Ala-tRNA-ligase_IIc_anticod-bd"/>
</dbReference>
<dbReference type="InterPro" id="IPR018165">
    <property type="entry name" value="Ala-tRNA-synth_IIc_core"/>
</dbReference>
<dbReference type="InterPro" id="IPR018164">
    <property type="entry name" value="Ala-tRNA-synth_IIc_N"/>
</dbReference>
<dbReference type="InterPro" id="IPR050058">
    <property type="entry name" value="Ala-tRNA_ligase"/>
</dbReference>
<dbReference type="InterPro" id="IPR023033">
    <property type="entry name" value="Ala_tRNA_ligase_euk/bac"/>
</dbReference>
<dbReference type="InterPro" id="IPR003156">
    <property type="entry name" value="DHHA1_dom"/>
</dbReference>
<dbReference type="InterPro" id="IPR018163">
    <property type="entry name" value="Thr/Ala-tRNA-synth_IIc_edit"/>
</dbReference>
<dbReference type="InterPro" id="IPR009000">
    <property type="entry name" value="Transl_B-barrel_sf"/>
</dbReference>
<dbReference type="InterPro" id="IPR012947">
    <property type="entry name" value="tRNA_SAD"/>
</dbReference>
<dbReference type="NCBIfam" id="TIGR00344">
    <property type="entry name" value="alaS"/>
    <property type="match status" value="1"/>
</dbReference>
<dbReference type="PANTHER" id="PTHR11777:SF9">
    <property type="entry name" value="ALANINE--TRNA LIGASE, CYTOPLASMIC"/>
    <property type="match status" value="1"/>
</dbReference>
<dbReference type="PANTHER" id="PTHR11777">
    <property type="entry name" value="ALANYL-TRNA SYNTHETASE"/>
    <property type="match status" value="1"/>
</dbReference>
<dbReference type="Pfam" id="PF02272">
    <property type="entry name" value="DHHA1"/>
    <property type="match status" value="1"/>
</dbReference>
<dbReference type="Pfam" id="PF01411">
    <property type="entry name" value="tRNA-synt_2c"/>
    <property type="match status" value="1"/>
</dbReference>
<dbReference type="Pfam" id="PF07973">
    <property type="entry name" value="tRNA_SAD"/>
    <property type="match status" value="1"/>
</dbReference>
<dbReference type="PRINTS" id="PR00980">
    <property type="entry name" value="TRNASYNTHALA"/>
</dbReference>
<dbReference type="SMART" id="SM00863">
    <property type="entry name" value="tRNA_SAD"/>
    <property type="match status" value="1"/>
</dbReference>
<dbReference type="SUPFAM" id="SSF55681">
    <property type="entry name" value="Class II aaRS and biotin synthetases"/>
    <property type="match status" value="1"/>
</dbReference>
<dbReference type="SUPFAM" id="SSF101353">
    <property type="entry name" value="Putative anticodon-binding domain of alanyl-tRNA synthetase (AlaRS)"/>
    <property type="match status" value="1"/>
</dbReference>
<dbReference type="SUPFAM" id="SSF55186">
    <property type="entry name" value="ThrRS/AlaRS common domain"/>
    <property type="match status" value="1"/>
</dbReference>
<dbReference type="SUPFAM" id="SSF50447">
    <property type="entry name" value="Translation proteins"/>
    <property type="match status" value="1"/>
</dbReference>
<dbReference type="PROSITE" id="PS50860">
    <property type="entry name" value="AA_TRNA_LIGASE_II_ALA"/>
    <property type="match status" value="1"/>
</dbReference>
<protein>
    <recommendedName>
        <fullName evidence="1">Alanine--tRNA ligase</fullName>
        <ecNumber evidence="1">6.1.1.7</ecNumber>
    </recommendedName>
    <alternativeName>
        <fullName evidence="1">Alanyl-tRNA synthetase</fullName>
        <shortName evidence="1">AlaRS</shortName>
    </alternativeName>
</protein>
<organism>
    <name type="scientific">Helicobacter pylori (strain J99 / ATCC 700824)</name>
    <name type="common">Campylobacter pylori J99</name>
    <dbReference type="NCBI Taxonomy" id="85963"/>
    <lineage>
        <taxon>Bacteria</taxon>
        <taxon>Pseudomonadati</taxon>
        <taxon>Campylobacterota</taxon>
        <taxon>Epsilonproteobacteria</taxon>
        <taxon>Campylobacterales</taxon>
        <taxon>Helicobacteraceae</taxon>
        <taxon>Helicobacter</taxon>
    </lineage>
</organism>
<reference key="1">
    <citation type="journal article" date="1999" name="Nature">
        <title>Genomic sequence comparison of two unrelated isolates of the human gastric pathogen Helicobacter pylori.</title>
        <authorList>
            <person name="Alm R.A."/>
            <person name="Ling L.-S.L."/>
            <person name="Moir D.T."/>
            <person name="King B.L."/>
            <person name="Brown E.D."/>
            <person name="Doig P.C."/>
            <person name="Smith D.R."/>
            <person name="Noonan B."/>
            <person name="Guild B.C."/>
            <person name="deJonge B.L."/>
            <person name="Carmel G."/>
            <person name="Tummino P.J."/>
            <person name="Caruso A."/>
            <person name="Uria-Nickelsen M."/>
            <person name="Mills D.M."/>
            <person name="Ives C."/>
            <person name="Gibson R."/>
            <person name="Merberg D."/>
            <person name="Mills S.D."/>
            <person name="Jiang Q."/>
            <person name="Taylor D.E."/>
            <person name="Vovis G.F."/>
            <person name="Trust T.J."/>
        </authorList>
    </citation>
    <scope>NUCLEOTIDE SEQUENCE [LARGE SCALE GENOMIC DNA]</scope>
    <source>
        <strain>J99 / ATCC 700824</strain>
    </source>
</reference>
<gene>
    <name evidence="1" type="primary">alaS</name>
    <name type="ordered locus">jhp_1162</name>
</gene>